<name>PLSX_BRUA2</name>
<reference key="1">
    <citation type="journal article" date="2005" name="Infect. Immun.">
        <title>Whole-genome analyses of speciation events in pathogenic Brucellae.</title>
        <authorList>
            <person name="Chain P.S."/>
            <person name="Comerci D.J."/>
            <person name="Tolmasky M.E."/>
            <person name="Larimer F.W."/>
            <person name="Malfatti S.A."/>
            <person name="Vergez L.M."/>
            <person name="Aguero F."/>
            <person name="Land M.L."/>
            <person name="Ugalde R.A."/>
            <person name="Garcia E."/>
        </authorList>
    </citation>
    <scope>NUCLEOTIDE SEQUENCE [LARGE SCALE GENOMIC DNA]</scope>
    <source>
        <strain>2308</strain>
    </source>
</reference>
<feature type="chain" id="PRO_1000001723" description="Phosphate acyltransferase">
    <location>
        <begin position="1"/>
        <end position="346"/>
    </location>
</feature>
<organism>
    <name type="scientific">Brucella abortus (strain 2308)</name>
    <dbReference type="NCBI Taxonomy" id="359391"/>
    <lineage>
        <taxon>Bacteria</taxon>
        <taxon>Pseudomonadati</taxon>
        <taxon>Pseudomonadota</taxon>
        <taxon>Alphaproteobacteria</taxon>
        <taxon>Hyphomicrobiales</taxon>
        <taxon>Brucellaceae</taxon>
        <taxon>Brucella/Ochrobactrum group</taxon>
        <taxon>Brucella</taxon>
    </lineage>
</organism>
<sequence length="346" mass="36970">MIKISIDAMGGDFGPEVVIPGAAKAFERHPDIRFIFFGLPAQVEPVLARYPKLKEASEFRASEVAIGMDDKPSQALRAGRGKSSMWQAIEAVKTGDADACVSAGNTGALMAMSKFCLRMMSDVERPAIAGIWPTLRGESIVLDIGATIGADARQLVDYAVMGAGMARALFEVRKPTVGLLNVGTEEVKGLDEIKEAGQILRDTPLDGLEYSGFVEGNDIGKGTVDVVVTEGFTGNIALKTAEGTARQMAELLRQAMSRTLLAKIGYVFAKGAFDRLREKMDPNKVNGGVFLGLSGIVIKSHGGANAEGFCSAVEVGYDMVRNRLLEKIEADLAHFHHSHSHVSSKA</sequence>
<comment type="function">
    <text evidence="1">Catalyzes the reversible formation of acyl-phosphate (acyl-PO(4)) from acyl-[acyl-carrier-protein] (acyl-ACP). This enzyme utilizes acyl-ACP as fatty acyl donor, but not acyl-CoA.</text>
</comment>
<comment type="catalytic activity">
    <reaction evidence="1">
        <text>a fatty acyl-[ACP] + phosphate = an acyl phosphate + holo-[ACP]</text>
        <dbReference type="Rhea" id="RHEA:42292"/>
        <dbReference type="Rhea" id="RHEA-COMP:9685"/>
        <dbReference type="Rhea" id="RHEA-COMP:14125"/>
        <dbReference type="ChEBI" id="CHEBI:43474"/>
        <dbReference type="ChEBI" id="CHEBI:59918"/>
        <dbReference type="ChEBI" id="CHEBI:64479"/>
        <dbReference type="ChEBI" id="CHEBI:138651"/>
        <dbReference type="EC" id="2.3.1.274"/>
    </reaction>
</comment>
<comment type="pathway">
    <text evidence="1">Lipid metabolism; phospholipid metabolism.</text>
</comment>
<comment type="subunit">
    <text evidence="1">Homodimer. Probably interacts with PlsY.</text>
</comment>
<comment type="subcellular location">
    <subcellularLocation>
        <location evidence="1">Cytoplasm</location>
    </subcellularLocation>
    <text evidence="1">Associated with the membrane possibly through PlsY.</text>
</comment>
<comment type="similarity">
    <text evidence="1">Belongs to the PlsX family.</text>
</comment>
<keyword id="KW-0963">Cytoplasm</keyword>
<keyword id="KW-0444">Lipid biosynthesis</keyword>
<keyword id="KW-0443">Lipid metabolism</keyword>
<keyword id="KW-0594">Phospholipid biosynthesis</keyword>
<keyword id="KW-1208">Phospholipid metabolism</keyword>
<keyword id="KW-1185">Reference proteome</keyword>
<keyword id="KW-0808">Transferase</keyword>
<dbReference type="EC" id="2.3.1.274" evidence="1"/>
<dbReference type="EMBL" id="AM040264">
    <property type="protein sequence ID" value="CAJ10753.1"/>
    <property type="molecule type" value="Genomic_DNA"/>
</dbReference>
<dbReference type="RefSeq" id="WP_002963912.1">
    <property type="nucleotide sequence ID" value="NZ_KN046823.1"/>
</dbReference>
<dbReference type="SMR" id="Q2YNC0"/>
<dbReference type="STRING" id="359391.BAB1_0797"/>
<dbReference type="GeneID" id="93016835"/>
<dbReference type="KEGG" id="bmf:BAB1_0797"/>
<dbReference type="PATRIC" id="fig|359391.11.peg.3108"/>
<dbReference type="HOGENOM" id="CLU_039379_1_0_5"/>
<dbReference type="PhylomeDB" id="Q2YNC0"/>
<dbReference type="UniPathway" id="UPA00085"/>
<dbReference type="Proteomes" id="UP000002719">
    <property type="component" value="Chromosome I"/>
</dbReference>
<dbReference type="GO" id="GO:0005737">
    <property type="term" value="C:cytoplasm"/>
    <property type="evidence" value="ECO:0007669"/>
    <property type="project" value="UniProtKB-SubCell"/>
</dbReference>
<dbReference type="GO" id="GO:0043811">
    <property type="term" value="F:phosphate:acyl-[acyl carrier protein] acyltransferase activity"/>
    <property type="evidence" value="ECO:0007669"/>
    <property type="project" value="UniProtKB-UniRule"/>
</dbReference>
<dbReference type="GO" id="GO:0006633">
    <property type="term" value="P:fatty acid biosynthetic process"/>
    <property type="evidence" value="ECO:0007669"/>
    <property type="project" value="UniProtKB-UniRule"/>
</dbReference>
<dbReference type="GO" id="GO:0008654">
    <property type="term" value="P:phospholipid biosynthetic process"/>
    <property type="evidence" value="ECO:0007669"/>
    <property type="project" value="UniProtKB-KW"/>
</dbReference>
<dbReference type="Gene3D" id="3.40.718.10">
    <property type="entry name" value="Isopropylmalate Dehydrogenase"/>
    <property type="match status" value="1"/>
</dbReference>
<dbReference type="HAMAP" id="MF_00019">
    <property type="entry name" value="PlsX"/>
    <property type="match status" value="1"/>
</dbReference>
<dbReference type="InterPro" id="IPR003664">
    <property type="entry name" value="FA_synthesis"/>
</dbReference>
<dbReference type="InterPro" id="IPR012281">
    <property type="entry name" value="Phospholipid_synth_PlsX-like"/>
</dbReference>
<dbReference type="NCBIfam" id="TIGR00182">
    <property type="entry name" value="plsX"/>
    <property type="match status" value="1"/>
</dbReference>
<dbReference type="PANTHER" id="PTHR30100">
    <property type="entry name" value="FATTY ACID/PHOSPHOLIPID SYNTHESIS PROTEIN PLSX"/>
    <property type="match status" value="1"/>
</dbReference>
<dbReference type="PANTHER" id="PTHR30100:SF1">
    <property type="entry name" value="PHOSPHATE ACYLTRANSFERASE"/>
    <property type="match status" value="1"/>
</dbReference>
<dbReference type="Pfam" id="PF02504">
    <property type="entry name" value="FA_synthesis"/>
    <property type="match status" value="1"/>
</dbReference>
<dbReference type="PIRSF" id="PIRSF002465">
    <property type="entry name" value="Phsphlp_syn_PlsX"/>
    <property type="match status" value="1"/>
</dbReference>
<dbReference type="SUPFAM" id="SSF53659">
    <property type="entry name" value="Isocitrate/Isopropylmalate dehydrogenase-like"/>
    <property type="match status" value="1"/>
</dbReference>
<gene>
    <name evidence="1" type="primary">plsX</name>
    <name type="ordered locus">BAB1_0797</name>
</gene>
<accession>Q2YNC0</accession>
<proteinExistence type="inferred from homology"/>
<protein>
    <recommendedName>
        <fullName evidence="1">Phosphate acyltransferase</fullName>
        <ecNumber evidence="1">2.3.1.274</ecNumber>
    </recommendedName>
    <alternativeName>
        <fullName evidence="1">Acyl-ACP phosphotransacylase</fullName>
    </alternativeName>
    <alternativeName>
        <fullName evidence="1">Acyl-[acyl-carrier-protein]--phosphate acyltransferase</fullName>
    </alternativeName>
    <alternativeName>
        <fullName evidence="1">Phosphate-acyl-ACP acyltransferase</fullName>
    </alternativeName>
</protein>
<evidence type="ECO:0000255" key="1">
    <source>
        <dbReference type="HAMAP-Rule" id="MF_00019"/>
    </source>
</evidence>